<feature type="chain" id="PRO_0000296449" description="Large ribosomal subunit protein bL32">
    <location>
        <begin position="1"/>
        <end position="60"/>
    </location>
</feature>
<comment type="similarity">
    <text evidence="1">Belongs to the bacterial ribosomal protein bL32 family.</text>
</comment>
<protein>
    <recommendedName>
        <fullName evidence="1">Large ribosomal subunit protein bL32</fullName>
    </recommendedName>
    <alternativeName>
        <fullName evidence="2">50S ribosomal protein L32</fullName>
    </alternativeName>
</protein>
<name>RL32_CLOP1</name>
<reference key="1">
    <citation type="journal article" date="2006" name="Genome Res.">
        <title>Skewed genomic variability in strains of the toxigenic bacterial pathogen, Clostridium perfringens.</title>
        <authorList>
            <person name="Myers G.S.A."/>
            <person name="Rasko D.A."/>
            <person name="Cheung J.K."/>
            <person name="Ravel J."/>
            <person name="Seshadri R."/>
            <person name="DeBoy R.T."/>
            <person name="Ren Q."/>
            <person name="Varga J."/>
            <person name="Awad M.M."/>
            <person name="Brinkac L.M."/>
            <person name="Daugherty S.C."/>
            <person name="Haft D.H."/>
            <person name="Dodson R.J."/>
            <person name="Madupu R."/>
            <person name="Nelson W.C."/>
            <person name="Rosovitz M.J."/>
            <person name="Sullivan S.A."/>
            <person name="Khouri H."/>
            <person name="Dimitrov G.I."/>
            <person name="Watkins K.L."/>
            <person name="Mulligan S."/>
            <person name="Benton J."/>
            <person name="Radune D."/>
            <person name="Fisher D.J."/>
            <person name="Atkins H.S."/>
            <person name="Hiscox T."/>
            <person name="Jost B.H."/>
            <person name="Billington S.J."/>
            <person name="Songer J.G."/>
            <person name="McClane B.A."/>
            <person name="Titball R.W."/>
            <person name="Rood J.I."/>
            <person name="Melville S.B."/>
            <person name="Paulsen I.T."/>
        </authorList>
    </citation>
    <scope>NUCLEOTIDE SEQUENCE [LARGE SCALE GENOMIC DNA]</scope>
    <source>
        <strain>ATCC 13124 / DSM 756 / JCM 1290 / NCIMB 6125 / NCTC 8237 / S 107 / Type A</strain>
    </source>
</reference>
<dbReference type="EMBL" id="CP000246">
    <property type="protein sequence ID" value="ABG84008.1"/>
    <property type="molecule type" value="Genomic_DNA"/>
</dbReference>
<dbReference type="RefSeq" id="WP_003449428.1">
    <property type="nucleotide sequence ID" value="NC_008261.1"/>
</dbReference>
<dbReference type="SMR" id="Q0TPN2"/>
<dbReference type="STRING" id="195103.CPF_1975"/>
<dbReference type="PaxDb" id="195103-CPF_1975"/>
<dbReference type="GeneID" id="93001741"/>
<dbReference type="KEGG" id="cpf:CPF_1975"/>
<dbReference type="eggNOG" id="COG0333">
    <property type="taxonomic scope" value="Bacteria"/>
</dbReference>
<dbReference type="HOGENOM" id="CLU_129084_1_3_9"/>
<dbReference type="Proteomes" id="UP000001823">
    <property type="component" value="Chromosome"/>
</dbReference>
<dbReference type="GO" id="GO:0015934">
    <property type="term" value="C:large ribosomal subunit"/>
    <property type="evidence" value="ECO:0007669"/>
    <property type="project" value="InterPro"/>
</dbReference>
<dbReference type="GO" id="GO:0003735">
    <property type="term" value="F:structural constituent of ribosome"/>
    <property type="evidence" value="ECO:0007669"/>
    <property type="project" value="InterPro"/>
</dbReference>
<dbReference type="GO" id="GO:0006412">
    <property type="term" value="P:translation"/>
    <property type="evidence" value="ECO:0007669"/>
    <property type="project" value="UniProtKB-UniRule"/>
</dbReference>
<dbReference type="HAMAP" id="MF_00340">
    <property type="entry name" value="Ribosomal_bL32"/>
    <property type="match status" value="1"/>
</dbReference>
<dbReference type="InterPro" id="IPR002677">
    <property type="entry name" value="Ribosomal_bL32"/>
</dbReference>
<dbReference type="InterPro" id="IPR044957">
    <property type="entry name" value="Ribosomal_bL32_bact"/>
</dbReference>
<dbReference type="InterPro" id="IPR011332">
    <property type="entry name" value="Ribosomal_zn-bd"/>
</dbReference>
<dbReference type="NCBIfam" id="TIGR01031">
    <property type="entry name" value="rpmF_bact"/>
    <property type="match status" value="1"/>
</dbReference>
<dbReference type="PANTHER" id="PTHR35534">
    <property type="entry name" value="50S RIBOSOMAL PROTEIN L32"/>
    <property type="match status" value="1"/>
</dbReference>
<dbReference type="PANTHER" id="PTHR35534:SF2">
    <property type="entry name" value="LARGE RIBOSOMAL SUBUNIT PROTEIN BL32"/>
    <property type="match status" value="1"/>
</dbReference>
<dbReference type="Pfam" id="PF01783">
    <property type="entry name" value="Ribosomal_L32p"/>
    <property type="match status" value="1"/>
</dbReference>
<dbReference type="SUPFAM" id="SSF57829">
    <property type="entry name" value="Zn-binding ribosomal proteins"/>
    <property type="match status" value="1"/>
</dbReference>
<proteinExistence type="inferred from homology"/>
<gene>
    <name evidence="1" type="primary">rpmF</name>
    <name type="ordered locus">CPF_1975</name>
</gene>
<organism>
    <name type="scientific">Clostridium perfringens (strain ATCC 13124 / DSM 756 / JCM 1290 / NCIMB 6125 / NCTC 8237 / Type A)</name>
    <dbReference type="NCBI Taxonomy" id="195103"/>
    <lineage>
        <taxon>Bacteria</taxon>
        <taxon>Bacillati</taxon>
        <taxon>Bacillota</taxon>
        <taxon>Clostridia</taxon>
        <taxon>Eubacteriales</taxon>
        <taxon>Clostridiaceae</taxon>
        <taxon>Clostridium</taxon>
    </lineage>
</organism>
<keyword id="KW-0687">Ribonucleoprotein</keyword>
<keyword id="KW-0689">Ribosomal protein</keyword>
<sequence>MGNPARKTFRAKRDSRRAQTFKASLPGIVECPQCHEMKMAHRVCKNCGHYKGKEVVSVEE</sequence>
<accession>Q0TPN2</accession>
<evidence type="ECO:0000255" key="1">
    <source>
        <dbReference type="HAMAP-Rule" id="MF_00340"/>
    </source>
</evidence>
<evidence type="ECO:0000305" key="2"/>